<keyword id="KW-0067">ATP-binding</keyword>
<keyword id="KW-0119">Carbohydrate metabolism</keyword>
<keyword id="KW-0418">Kinase</keyword>
<keyword id="KW-0547">Nucleotide-binding</keyword>
<keyword id="KW-0808">Transferase</keyword>
<comment type="function">
    <text evidence="1">Catalyzes the specific phosphorylation of 1,6-anhydro-N-acetylmuramic acid (anhMurNAc) with the simultaneous cleavage of the 1,6-anhydro ring, generating MurNAc-6-P. Is required for the utilization of anhMurNAc either imported from the medium or derived from its own cell wall murein, and thus plays a role in cell wall recycling.</text>
</comment>
<comment type="catalytic activity">
    <reaction evidence="1">
        <text>1,6-anhydro-N-acetyl-beta-muramate + ATP + H2O = N-acetyl-D-muramate 6-phosphate + ADP + H(+)</text>
        <dbReference type="Rhea" id="RHEA:24952"/>
        <dbReference type="ChEBI" id="CHEBI:15377"/>
        <dbReference type="ChEBI" id="CHEBI:15378"/>
        <dbReference type="ChEBI" id="CHEBI:30616"/>
        <dbReference type="ChEBI" id="CHEBI:58690"/>
        <dbReference type="ChEBI" id="CHEBI:58722"/>
        <dbReference type="ChEBI" id="CHEBI:456216"/>
        <dbReference type="EC" id="2.7.1.170"/>
    </reaction>
</comment>
<comment type="pathway">
    <text evidence="1">Amino-sugar metabolism; 1,6-anhydro-N-acetylmuramate degradation.</text>
</comment>
<comment type="pathway">
    <text evidence="1">Cell wall biogenesis; peptidoglycan recycling.</text>
</comment>
<comment type="similarity">
    <text evidence="1">Belongs to the anhydro-N-acetylmuramic acid kinase family.</text>
</comment>
<sequence length="382" mass="42033">MYIAGVMSGTSLDGIDVALVRIEGSGVESKVELIHFTTVPFCNDIKSEIQQALSIENSNVQLICSLNFKLGLCFANAVKEVCKEANFSLEQLDLIGSHGQTIYHQPKQDGNRIPSTLQIGEPAVIAYETNTTVISNFRTMDMAAGGQGAPLVPYSEVILYRDPSKNRLLQNIGGISNVTVIPNQQSDQNVIAFDTGPGNMIIDEVCQRLFQLPYDQNGEIAKQGRVVNEILTYCMSHQFLKMNPPKSTGREQFGEKFVSELLKRFEKHSKENILTTVTMFTANSIVHHYKKFILPYYEIDEVILGGGGSYNSTLVEMLRNGLKDENCAIFIQEDIGYSSEAKEAIAFAILANETHHCNPSNVPSATGAKQSVVLGNITFPPV</sequence>
<evidence type="ECO:0000255" key="1">
    <source>
        <dbReference type="HAMAP-Rule" id="MF_01270"/>
    </source>
</evidence>
<reference key="1">
    <citation type="submission" date="2009-02" db="EMBL/GenBank/DDBJ databases">
        <title>Genome sequence of Bacillus cereus 03BB102.</title>
        <authorList>
            <person name="Dodson R.J."/>
            <person name="Jackson P."/>
            <person name="Munk A.C."/>
            <person name="Brettin T."/>
            <person name="Bruce D."/>
            <person name="Detter C."/>
            <person name="Tapia R."/>
            <person name="Han C."/>
            <person name="Sutton G."/>
            <person name="Sims D."/>
        </authorList>
    </citation>
    <scope>NUCLEOTIDE SEQUENCE [LARGE SCALE GENOMIC DNA]</scope>
    <source>
        <strain>03BB102</strain>
    </source>
</reference>
<proteinExistence type="inferred from homology"/>
<gene>
    <name evidence="1" type="primary">anmK</name>
    <name type="ordered locus">BCA_2528</name>
</gene>
<organism>
    <name type="scientific">Bacillus cereus (strain 03BB102)</name>
    <dbReference type="NCBI Taxonomy" id="572264"/>
    <lineage>
        <taxon>Bacteria</taxon>
        <taxon>Bacillati</taxon>
        <taxon>Bacillota</taxon>
        <taxon>Bacilli</taxon>
        <taxon>Bacillales</taxon>
        <taxon>Bacillaceae</taxon>
        <taxon>Bacillus</taxon>
        <taxon>Bacillus cereus group</taxon>
    </lineage>
</organism>
<name>ANMK_BACC3</name>
<accession>C1EUL0</accession>
<dbReference type="EC" id="2.7.1.170" evidence="1"/>
<dbReference type="EMBL" id="CP001407">
    <property type="protein sequence ID" value="ACO30097.1"/>
    <property type="molecule type" value="Genomic_DNA"/>
</dbReference>
<dbReference type="RefSeq" id="WP_000274994.1">
    <property type="nucleotide sequence ID" value="NZ_CP009318.1"/>
</dbReference>
<dbReference type="SMR" id="C1EUL0"/>
<dbReference type="KEGG" id="bcx:BCA_2528"/>
<dbReference type="PATRIC" id="fig|572264.18.peg.2477"/>
<dbReference type="UniPathway" id="UPA00343"/>
<dbReference type="UniPathway" id="UPA00544"/>
<dbReference type="Proteomes" id="UP000002210">
    <property type="component" value="Chromosome"/>
</dbReference>
<dbReference type="GO" id="GO:0005524">
    <property type="term" value="F:ATP binding"/>
    <property type="evidence" value="ECO:0007669"/>
    <property type="project" value="UniProtKB-UniRule"/>
</dbReference>
<dbReference type="GO" id="GO:0016301">
    <property type="term" value="F:kinase activity"/>
    <property type="evidence" value="ECO:0007669"/>
    <property type="project" value="UniProtKB-KW"/>
</dbReference>
<dbReference type="GO" id="GO:0016773">
    <property type="term" value="F:phosphotransferase activity, alcohol group as acceptor"/>
    <property type="evidence" value="ECO:0007669"/>
    <property type="project" value="UniProtKB-UniRule"/>
</dbReference>
<dbReference type="GO" id="GO:0097175">
    <property type="term" value="P:1,6-anhydro-N-acetyl-beta-muramic acid catabolic process"/>
    <property type="evidence" value="ECO:0007669"/>
    <property type="project" value="UniProtKB-UniRule"/>
</dbReference>
<dbReference type="GO" id="GO:0006040">
    <property type="term" value="P:amino sugar metabolic process"/>
    <property type="evidence" value="ECO:0007669"/>
    <property type="project" value="InterPro"/>
</dbReference>
<dbReference type="GO" id="GO:0009254">
    <property type="term" value="P:peptidoglycan turnover"/>
    <property type="evidence" value="ECO:0007669"/>
    <property type="project" value="UniProtKB-UniRule"/>
</dbReference>
<dbReference type="CDD" id="cd24050">
    <property type="entry name" value="ASKHA_NBD_ANMK"/>
    <property type="match status" value="1"/>
</dbReference>
<dbReference type="Gene3D" id="3.30.420.40">
    <property type="match status" value="2"/>
</dbReference>
<dbReference type="HAMAP" id="MF_01270">
    <property type="entry name" value="AnhMurNAc_kinase"/>
    <property type="match status" value="1"/>
</dbReference>
<dbReference type="InterPro" id="IPR005338">
    <property type="entry name" value="Anhydro_N_Ac-Mur_kinase"/>
</dbReference>
<dbReference type="InterPro" id="IPR043129">
    <property type="entry name" value="ATPase_NBD"/>
</dbReference>
<dbReference type="NCBIfam" id="NF007142">
    <property type="entry name" value="PRK09585.2-1"/>
    <property type="match status" value="1"/>
</dbReference>
<dbReference type="NCBIfam" id="NF007148">
    <property type="entry name" value="PRK09585.3-2"/>
    <property type="match status" value="1"/>
</dbReference>
<dbReference type="PANTHER" id="PTHR30605">
    <property type="entry name" value="ANHYDRO-N-ACETYLMURAMIC ACID KINASE"/>
    <property type="match status" value="1"/>
</dbReference>
<dbReference type="PANTHER" id="PTHR30605:SF0">
    <property type="entry name" value="ANHYDRO-N-ACETYLMURAMIC ACID KINASE"/>
    <property type="match status" value="1"/>
</dbReference>
<dbReference type="Pfam" id="PF03702">
    <property type="entry name" value="AnmK"/>
    <property type="match status" value="1"/>
</dbReference>
<dbReference type="SUPFAM" id="SSF53067">
    <property type="entry name" value="Actin-like ATPase domain"/>
    <property type="match status" value="1"/>
</dbReference>
<protein>
    <recommendedName>
        <fullName evidence="1">Anhydro-N-acetylmuramic acid kinase</fullName>
        <ecNumber evidence="1">2.7.1.170</ecNumber>
    </recommendedName>
    <alternativeName>
        <fullName evidence="1">AnhMurNAc kinase</fullName>
    </alternativeName>
</protein>
<feature type="chain" id="PRO_1000214156" description="Anhydro-N-acetylmuramic acid kinase">
    <location>
        <begin position="1"/>
        <end position="382"/>
    </location>
</feature>
<feature type="binding site" evidence="1">
    <location>
        <begin position="9"/>
        <end position="16"/>
    </location>
    <ligand>
        <name>ATP</name>
        <dbReference type="ChEBI" id="CHEBI:30616"/>
    </ligand>
</feature>